<dbReference type="EC" id="1.2.1.10" evidence="1"/>
<dbReference type="EMBL" id="D85853">
    <property type="protein sequence ID" value="BAA12885.1"/>
    <property type="molecule type" value="Genomic_DNA"/>
</dbReference>
<dbReference type="RefSeq" id="WP_003450975.1">
    <property type="nucleotide sequence ID" value="NZ_AJMR01000119.1"/>
</dbReference>
<dbReference type="SMR" id="Q52039"/>
<dbReference type="STRING" id="1149133.ppKF707_3397"/>
<dbReference type="OrthoDB" id="9786743at2"/>
<dbReference type="GO" id="GO:0008774">
    <property type="term" value="F:acetaldehyde dehydrogenase (acetylating) activity"/>
    <property type="evidence" value="ECO:0007669"/>
    <property type="project" value="UniProtKB-UniRule"/>
</dbReference>
<dbReference type="GO" id="GO:0051287">
    <property type="term" value="F:NAD binding"/>
    <property type="evidence" value="ECO:0007669"/>
    <property type="project" value="UniProtKB-UniRule"/>
</dbReference>
<dbReference type="GO" id="GO:0009056">
    <property type="term" value="P:catabolic process"/>
    <property type="evidence" value="ECO:0007669"/>
    <property type="project" value="UniProtKB-KW"/>
</dbReference>
<dbReference type="CDD" id="cd23933">
    <property type="entry name" value="ALDH_C"/>
    <property type="match status" value="1"/>
</dbReference>
<dbReference type="Gene3D" id="3.30.360.10">
    <property type="entry name" value="Dihydrodipicolinate Reductase, domain 2"/>
    <property type="match status" value="1"/>
</dbReference>
<dbReference type="Gene3D" id="3.40.50.720">
    <property type="entry name" value="NAD(P)-binding Rossmann-like Domain"/>
    <property type="match status" value="1"/>
</dbReference>
<dbReference type="HAMAP" id="MF_01657">
    <property type="entry name" value="Ac_ald_DH_ac"/>
    <property type="match status" value="1"/>
</dbReference>
<dbReference type="InterPro" id="IPR003361">
    <property type="entry name" value="Acetaldehyde_dehydrogenase"/>
</dbReference>
<dbReference type="InterPro" id="IPR015426">
    <property type="entry name" value="Acetylaldehyde_DH_C"/>
</dbReference>
<dbReference type="InterPro" id="IPR036291">
    <property type="entry name" value="NAD(P)-bd_dom_sf"/>
</dbReference>
<dbReference type="InterPro" id="IPR000534">
    <property type="entry name" value="Semialdehyde_DH_NAD-bd"/>
</dbReference>
<dbReference type="NCBIfam" id="TIGR03215">
    <property type="entry name" value="ac_ald_DH_ac"/>
    <property type="match status" value="1"/>
</dbReference>
<dbReference type="NCBIfam" id="NF006157">
    <property type="entry name" value="PRK08300.1"/>
    <property type="match status" value="1"/>
</dbReference>
<dbReference type="Pfam" id="PF09290">
    <property type="entry name" value="AcetDehyd-dimer"/>
    <property type="match status" value="1"/>
</dbReference>
<dbReference type="PIRSF" id="PIRSF015689">
    <property type="entry name" value="Actaldh_dh_actl"/>
    <property type="match status" value="1"/>
</dbReference>
<dbReference type="SMART" id="SM00859">
    <property type="entry name" value="Semialdhyde_dh"/>
    <property type="match status" value="1"/>
</dbReference>
<dbReference type="SUPFAM" id="SSF55347">
    <property type="entry name" value="Glyceraldehyde-3-phosphate dehydrogenase-like, C-terminal domain"/>
    <property type="match status" value="1"/>
</dbReference>
<dbReference type="SUPFAM" id="SSF51735">
    <property type="entry name" value="NAD(P)-binding Rossmann-fold domains"/>
    <property type="match status" value="1"/>
</dbReference>
<gene>
    <name type="primary">bphX2</name>
</gene>
<feature type="chain" id="PRO_0000387707" description="Acetaldehyde dehydrogenase 2">
    <location>
        <begin position="1"/>
        <end position="304"/>
    </location>
</feature>
<feature type="active site" description="Acyl-thioester intermediate" evidence="1">
    <location>
        <position position="131"/>
    </location>
</feature>
<feature type="binding site" evidence="1">
    <location>
        <begin position="162"/>
        <end position="170"/>
    </location>
    <ligand>
        <name>NAD(+)</name>
        <dbReference type="ChEBI" id="CHEBI:57540"/>
    </ligand>
</feature>
<feature type="binding site" evidence="1">
    <location>
        <position position="273"/>
    </location>
    <ligand>
        <name>NAD(+)</name>
        <dbReference type="ChEBI" id="CHEBI:57540"/>
    </ligand>
</feature>
<protein>
    <recommendedName>
        <fullName evidence="1">Acetaldehyde dehydrogenase 2</fullName>
        <ecNumber evidence="1">1.2.1.10</ecNumber>
    </recommendedName>
    <alternativeName>
        <fullName evidence="1">Acetaldehyde dehydrogenase [acetylating] 2</fullName>
    </alternativeName>
</protein>
<reference key="1">
    <citation type="journal article" date="1997" name="J. Bacteriol.">
        <title>Functional analyses of a variety of chimeric dioxygenases constructed from two biphenyl dioxygenases that are similar structurally but different functionally.</title>
        <authorList>
            <person name="Kimura N."/>
            <person name="Nishi A."/>
            <person name="Goto M."/>
            <person name="Furukawa K."/>
        </authorList>
    </citation>
    <scope>NUCLEOTIDE SEQUENCE [GENOMIC DNA]</scope>
    <source>
        <strain>DSM 10086 / NBRC 110670 / KF707</strain>
    </source>
</reference>
<accession>Q52039</accession>
<accession>Q59722</accession>
<proteinExistence type="inferred from homology"/>
<organism>
    <name type="scientific">Metapseudomonas furukawaii</name>
    <name type="common">Pseudomonas furukawaii</name>
    <dbReference type="NCBI Taxonomy" id="1149133"/>
    <lineage>
        <taxon>Bacteria</taxon>
        <taxon>Pseudomonadati</taxon>
        <taxon>Pseudomonadota</taxon>
        <taxon>Gammaproteobacteria</taxon>
        <taxon>Pseudomonadales</taxon>
        <taxon>Pseudomonadaceae</taxon>
        <taxon>Metapseudomonas</taxon>
    </lineage>
</organism>
<sequence>MTKKIKCALIGPGNIGTDLLAKLQRSPVLEPIWMVGIDPESDGLKRAREMGIKTTADGVDGLIPHMQADGVQIVFDATSAYVHADNSRKVNALGALMIDLTPAAIGPFCVPTVNLKEHVGKGEMNVNMVTCGGQATIPMVAAVSRVQPVAYGEIVATVSSKSAGPGTRKNIDEFTRTTAGAVEKVGGAKKGKAIIILNPAEPPLIMRDTVHCLLESEPDQAKITESIHAMIKEVQKYVPGYKLVNGPVFDGLRVSVYLEVEGLGDYLPKYAGNLDIMTAAAARTAEMFAEEILAGQLTLQPVHA</sequence>
<keyword id="KW-0058">Aromatic hydrocarbons catabolism</keyword>
<keyword id="KW-0520">NAD</keyword>
<keyword id="KW-0560">Oxidoreductase</keyword>
<name>ACDH2_METFU</name>
<comment type="catalytic activity">
    <reaction evidence="1">
        <text>acetaldehyde + NAD(+) + CoA = acetyl-CoA + NADH + H(+)</text>
        <dbReference type="Rhea" id="RHEA:23288"/>
        <dbReference type="ChEBI" id="CHEBI:15343"/>
        <dbReference type="ChEBI" id="CHEBI:15378"/>
        <dbReference type="ChEBI" id="CHEBI:57287"/>
        <dbReference type="ChEBI" id="CHEBI:57288"/>
        <dbReference type="ChEBI" id="CHEBI:57540"/>
        <dbReference type="ChEBI" id="CHEBI:57945"/>
        <dbReference type="EC" id="1.2.1.10"/>
    </reaction>
</comment>
<comment type="similarity">
    <text evidence="1">Belongs to the acetaldehyde dehydrogenase family.</text>
</comment>
<evidence type="ECO:0000255" key="1">
    <source>
        <dbReference type="HAMAP-Rule" id="MF_01657"/>
    </source>
</evidence>